<evidence type="ECO:0000255" key="1">
    <source>
        <dbReference type="HAMAP-Rule" id="MF_01620"/>
    </source>
</evidence>
<keyword id="KW-0012">Acyltransferase</keyword>
<keyword id="KW-0963">Cytoplasm</keyword>
<keyword id="KW-0276">Fatty acid metabolism</keyword>
<keyword id="KW-0442">Lipid degradation</keyword>
<keyword id="KW-0443">Lipid metabolism</keyword>
<keyword id="KW-0808">Transferase</keyword>
<gene>
    <name evidence="1" type="primary">fadA</name>
    <name type="ordered locus">Pcryo_2226</name>
</gene>
<name>FADA_PSYCK</name>
<feature type="chain" id="PRO_0000292898" description="3-ketoacyl-CoA thiolase">
    <location>
        <begin position="1"/>
        <end position="390"/>
    </location>
</feature>
<feature type="active site" description="Acyl-thioester intermediate" evidence="1">
    <location>
        <position position="95"/>
    </location>
</feature>
<feature type="active site" description="Proton acceptor" evidence="1">
    <location>
        <position position="346"/>
    </location>
</feature>
<feature type="active site" description="Proton acceptor" evidence="1">
    <location>
        <position position="376"/>
    </location>
</feature>
<comment type="function">
    <text evidence="1">Catalyzes the final step of fatty acid oxidation in which acetyl-CoA is released and the CoA ester of a fatty acid two carbons shorter is formed.</text>
</comment>
<comment type="catalytic activity">
    <reaction evidence="1">
        <text>an acyl-CoA + acetyl-CoA = a 3-oxoacyl-CoA + CoA</text>
        <dbReference type="Rhea" id="RHEA:21564"/>
        <dbReference type="ChEBI" id="CHEBI:57287"/>
        <dbReference type="ChEBI" id="CHEBI:57288"/>
        <dbReference type="ChEBI" id="CHEBI:58342"/>
        <dbReference type="ChEBI" id="CHEBI:90726"/>
        <dbReference type="EC" id="2.3.1.16"/>
    </reaction>
</comment>
<comment type="pathway">
    <text evidence="1">Lipid metabolism; fatty acid beta-oxidation.</text>
</comment>
<comment type="subunit">
    <text evidence="1">Heterotetramer of two alpha chains (FadB) and two beta chains (FadA).</text>
</comment>
<comment type="subcellular location">
    <subcellularLocation>
        <location evidence="1">Cytoplasm</location>
    </subcellularLocation>
</comment>
<comment type="similarity">
    <text evidence="1">Belongs to the thiolase-like superfamily. Thiolase family.</text>
</comment>
<dbReference type="EC" id="2.3.1.16" evidence="1"/>
<dbReference type="EMBL" id="CP000323">
    <property type="protein sequence ID" value="ABE76003.1"/>
    <property type="molecule type" value="Genomic_DNA"/>
</dbReference>
<dbReference type="RefSeq" id="WP_011514536.1">
    <property type="nucleotide sequence ID" value="NC_007969.1"/>
</dbReference>
<dbReference type="SMR" id="Q1Q8K0"/>
<dbReference type="STRING" id="335284.Pcryo_2226"/>
<dbReference type="KEGG" id="pcr:Pcryo_2226"/>
<dbReference type="eggNOG" id="COG0183">
    <property type="taxonomic scope" value="Bacteria"/>
</dbReference>
<dbReference type="HOGENOM" id="CLU_031026_2_2_6"/>
<dbReference type="UniPathway" id="UPA00659"/>
<dbReference type="Proteomes" id="UP000002425">
    <property type="component" value="Chromosome"/>
</dbReference>
<dbReference type="GO" id="GO:0005737">
    <property type="term" value="C:cytoplasm"/>
    <property type="evidence" value="ECO:0007669"/>
    <property type="project" value="UniProtKB-SubCell"/>
</dbReference>
<dbReference type="GO" id="GO:0003988">
    <property type="term" value="F:acetyl-CoA C-acyltransferase activity"/>
    <property type="evidence" value="ECO:0007669"/>
    <property type="project" value="UniProtKB-UniRule"/>
</dbReference>
<dbReference type="GO" id="GO:0006635">
    <property type="term" value="P:fatty acid beta-oxidation"/>
    <property type="evidence" value="ECO:0007669"/>
    <property type="project" value="UniProtKB-UniRule"/>
</dbReference>
<dbReference type="GO" id="GO:0010124">
    <property type="term" value="P:phenylacetate catabolic process"/>
    <property type="evidence" value="ECO:0007669"/>
    <property type="project" value="TreeGrafter"/>
</dbReference>
<dbReference type="CDD" id="cd00751">
    <property type="entry name" value="thiolase"/>
    <property type="match status" value="1"/>
</dbReference>
<dbReference type="FunFam" id="3.40.47.10:FF:000010">
    <property type="entry name" value="Acetyl-CoA acetyltransferase (Thiolase)"/>
    <property type="match status" value="1"/>
</dbReference>
<dbReference type="Gene3D" id="3.40.47.10">
    <property type="match status" value="2"/>
</dbReference>
<dbReference type="HAMAP" id="MF_01620">
    <property type="entry name" value="FadA"/>
    <property type="match status" value="1"/>
</dbReference>
<dbReference type="InterPro" id="IPR012805">
    <property type="entry name" value="FadA"/>
</dbReference>
<dbReference type="InterPro" id="IPR002155">
    <property type="entry name" value="Thiolase"/>
</dbReference>
<dbReference type="InterPro" id="IPR016039">
    <property type="entry name" value="Thiolase-like"/>
</dbReference>
<dbReference type="InterPro" id="IPR050215">
    <property type="entry name" value="Thiolase-like_sf_Thiolase"/>
</dbReference>
<dbReference type="InterPro" id="IPR020615">
    <property type="entry name" value="Thiolase_acyl_enz_int_AS"/>
</dbReference>
<dbReference type="InterPro" id="IPR020610">
    <property type="entry name" value="Thiolase_AS"/>
</dbReference>
<dbReference type="InterPro" id="IPR020617">
    <property type="entry name" value="Thiolase_C"/>
</dbReference>
<dbReference type="InterPro" id="IPR020613">
    <property type="entry name" value="Thiolase_CS"/>
</dbReference>
<dbReference type="InterPro" id="IPR020616">
    <property type="entry name" value="Thiolase_N"/>
</dbReference>
<dbReference type="NCBIfam" id="TIGR01930">
    <property type="entry name" value="AcCoA-C-Actrans"/>
    <property type="match status" value="1"/>
</dbReference>
<dbReference type="NCBIfam" id="TIGR02445">
    <property type="entry name" value="fadA"/>
    <property type="match status" value="1"/>
</dbReference>
<dbReference type="NCBIfam" id="NF006510">
    <property type="entry name" value="PRK08947.1"/>
    <property type="match status" value="1"/>
</dbReference>
<dbReference type="PANTHER" id="PTHR43853:SF11">
    <property type="entry name" value="3-KETOACYL-COA THIOLASE FADA"/>
    <property type="match status" value="1"/>
</dbReference>
<dbReference type="PANTHER" id="PTHR43853">
    <property type="entry name" value="3-KETOACYL-COA THIOLASE, PEROXISOMAL"/>
    <property type="match status" value="1"/>
</dbReference>
<dbReference type="Pfam" id="PF02803">
    <property type="entry name" value="Thiolase_C"/>
    <property type="match status" value="1"/>
</dbReference>
<dbReference type="Pfam" id="PF00108">
    <property type="entry name" value="Thiolase_N"/>
    <property type="match status" value="1"/>
</dbReference>
<dbReference type="PIRSF" id="PIRSF000429">
    <property type="entry name" value="Ac-CoA_Ac_transf"/>
    <property type="match status" value="1"/>
</dbReference>
<dbReference type="SUPFAM" id="SSF53901">
    <property type="entry name" value="Thiolase-like"/>
    <property type="match status" value="2"/>
</dbReference>
<dbReference type="PROSITE" id="PS00098">
    <property type="entry name" value="THIOLASE_1"/>
    <property type="match status" value="1"/>
</dbReference>
<dbReference type="PROSITE" id="PS00737">
    <property type="entry name" value="THIOLASE_2"/>
    <property type="match status" value="1"/>
</dbReference>
<dbReference type="PROSITE" id="PS00099">
    <property type="entry name" value="THIOLASE_3"/>
    <property type="match status" value="1"/>
</dbReference>
<organism>
    <name type="scientific">Psychrobacter cryohalolentis (strain ATCC BAA-1226 / DSM 17306 / VKM B-2378 / K5)</name>
    <dbReference type="NCBI Taxonomy" id="335284"/>
    <lineage>
        <taxon>Bacteria</taxon>
        <taxon>Pseudomonadati</taxon>
        <taxon>Pseudomonadota</taxon>
        <taxon>Gammaproteobacteria</taxon>
        <taxon>Moraxellales</taxon>
        <taxon>Moraxellaceae</taxon>
        <taxon>Psychrobacter</taxon>
    </lineage>
</organism>
<reference key="1">
    <citation type="submission" date="2006-03" db="EMBL/GenBank/DDBJ databases">
        <title>Complete sequence of chromosome of Psychrobacter cryohalolentis K5.</title>
        <authorList>
            <consortium name="US DOE Joint Genome Institute"/>
            <person name="Copeland A."/>
            <person name="Lucas S."/>
            <person name="Lapidus A."/>
            <person name="Barry K."/>
            <person name="Detter J.C."/>
            <person name="Glavina T."/>
            <person name="Hammon N."/>
            <person name="Israni S."/>
            <person name="Dalin E."/>
            <person name="Tice H."/>
            <person name="Pitluck S."/>
            <person name="Brettin T."/>
            <person name="Bruce D."/>
            <person name="Han C."/>
            <person name="Tapia R."/>
            <person name="Sims D.R."/>
            <person name="Gilna P."/>
            <person name="Schmutz J."/>
            <person name="Larimer F."/>
            <person name="Land M."/>
            <person name="Hauser L."/>
            <person name="Kyrpides N."/>
            <person name="Kim E."/>
            <person name="Richardson P."/>
        </authorList>
    </citation>
    <scope>NUCLEOTIDE SEQUENCE [LARGE SCALE GENOMIC DNA]</scope>
    <source>
        <strain>ATCC BAA-1226 / DSM 17306 / VKM B-2378 / K5</strain>
    </source>
</reference>
<sequence>MTILSPKDVVIVDGVRSAMGKTKNGMFRHVRADSMSAELVRALVERNDFDPRDVEDIIWGCVNQTLEQGLNIGRNIGLLAGIPKTAGGQTINRLCGSSMQALHTAAAQIMTGQGDVFIIGGVEHMGHVGMMHGVDLNPEASKHYAKASNMMGLTAEMLGRMNNITREEQDAFGLESHRRAWAATTEGRFDNEIIGIEGHDEAGRLQLCTVDEVIRPDATMEQMQKLRPAFDPVGGTVTAATSSALSDGASAMLIMSAQKAKELGLKPRARIRSMAIAGCDAAIMGYGPVPATQKALKRAGMSIDDMQTIELNEAFAAQGLSVLKALNLTDKQDIVNINGGAIALGHPLGCSGARITVTLLNAMEQSDTEIGLATMCIGLGQGIATIIERV</sequence>
<accession>Q1Q8K0</accession>
<protein>
    <recommendedName>
        <fullName evidence="1">3-ketoacyl-CoA thiolase</fullName>
        <ecNumber evidence="1">2.3.1.16</ecNumber>
    </recommendedName>
    <alternativeName>
        <fullName evidence="1">Acetyl-CoA acyltransferase</fullName>
    </alternativeName>
    <alternativeName>
        <fullName evidence="1">Beta-ketothiolase</fullName>
    </alternativeName>
    <alternativeName>
        <fullName evidence="1">Fatty acid oxidation complex subunit beta</fullName>
    </alternativeName>
</protein>
<proteinExistence type="inferred from homology"/>